<keyword id="KW-0408">Iron</keyword>
<keyword id="KW-0479">Metal-binding</keyword>
<keyword id="KW-0560">Oxidoreductase</keyword>
<organism>
    <name type="scientific">Salmonella typhi</name>
    <dbReference type="NCBI Taxonomy" id="90370"/>
    <lineage>
        <taxon>Bacteria</taxon>
        <taxon>Pseudomonadati</taxon>
        <taxon>Pseudomonadota</taxon>
        <taxon>Gammaproteobacteria</taxon>
        <taxon>Enterobacterales</taxon>
        <taxon>Enterobacteriaceae</taxon>
        <taxon>Salmonella</taxon>
    </lineage>
</organism>
<comment type="function">
    <text evidence="1">Destroys superoxide anion radicals which are normally produced within the cells and which are toxic to biological systems.</text>
</comment>
<comment type="catalytic activity">
    <reaction>
        <text>2 superoxide + 2 H(+) = H2O2 + O2</text>
        <dbReference type="Rhea" id="RHEA:20696"/>
        <dbReference type="ChEBI" id="CHEBI:15378"/>
        <dbReference type="ChEBI" id="CHEBI:15379"/>
        <dbReference type="ChEBI" id="CHEBI:16240"/>
        <dbReference type="ChEBI" id="CHEBI:18421"/>
        <dbReference type="EC" id="1.15.1.1"/>
    </reaction>
</comment>
<comment type="cofactor">
    <cofactor evidence="1">
        <name>Fe cation</name>
        <dbReference type="ChEBI" id="CHEBI:24875"/>
    </cofactor>
    <text evidence="1">Binds 1 Fe cation per subunit.</text>
</comment>
<comment type="subunit">
    <text evidence="1">Homodimer.</text>
</comment>
<comment type="similarity">
    <text evidence="2">Belongs to the iron/manganese superoxide dismutase family.</text>
</comment>
<dbReference type="EC" id="1.15.1.1"/>
<dbReference type="EMBL" id="AL513382">
    <property type="protein sequence ID" value="CAD01936.1"/>
    <property type="molecule type" value="Genomic_DNA"/>
</dbReference>
<dbReference type="EMBL" id="AE014613">
    <property type="protein sequence ID" value="AAO68949.1"/>
    <property type="molecule type" value="Genomic_DNA"/>
</dbReference>
<dbReference type="RefSeq" id="NP_456099.1">
    <property type="nucleotide sequence ID" value="NC_003198.1"/>
</dbReference>
<dbReference type="RefSeq" id="WP_000007299.1">
    <property type="nucleotide sequence ID" value="NZ_WSUR01000011.1"/>
</dbReference>
<dbReference type="SMR" id="P0A2F5"/>
<dbReference type="STRING" id="220341.gene:17585626"/>
<dbReference type="KEGG" id="stt:t1299"/>
<dbReference type="KEGG" id="sty:STY1691"/>
<dbReference type="PATRIC" id="fig|220341.7.peg.1701"/>
<dbReference type="eggNOG" id="COG0605">
    <property type="taxonomic scope" value="Bacteria"/>
</dbReference>
<dbReference type="HOGENOM" id="CLU_031625_0_0_6"/>
<dbReference type="OMA" id="DSLINWD"/>
<dbReference type="OrthoDB" id="9803125at2"/>
<dbReference type="Proteomes" id="UP000000541">
    <property type="component" value="Chromosome"/>
</dbReference>
<dbReference type="Proteomes" id="UP000002670">
    <property type="component" value="Chromosome"/>
</dbReference>
<dbReference type="GO" id="GO:0046872">
    <property type="term" value="F:metal ion binding"/>
    <property type="evidence" value="ECO:0007669"/>
    <property type="project" value="UniProtKB-KW"/>
</dbReference>
<dbReference type="GO" id="GO:0004784">
    <property type="term" value="F:superoxide dismutase activity"/>
    <property type="evidence" value="ECO:0007669"/>
    <property type="project" value="UniProtKB-EC"/>
</dbReference>
<dbReference type="FunFam" id="1.10.287.990:FF:000002">
    <property type="entry name" value="Superoxide dismutase"/>
    <property type="match status" value="1"/>
</dbReference>
<dbReference type="FunFam" id="3.55.40.20:FF:000001">
    <property type="entry name" value="Superoxide dismutase"/>
    <property type="match status" value="1"/>
</dbReference>
<dbReference type="Gene3D" id="1.10.287.990">
    <property type="entry name" value="Fe,Mn superoxide dismutase (SOD) domain"/>
    <property type="match status" value="1"/>
</dbReference>
<dbReference type="Gene3D" id="3.55.40.20">
    <property type="entry name" value="Iron/manganese superoxide dismutase, C-terminal domain"/>
    <property type="match status" value="1"/>
</dbReference>
<dbReference type="InterPro" id="IPR001189">
    <property type="entry name" value="Mn/Fe_SOD"/>
</dbReference>
<dbReference type="InterPro" id="IPR019833">
    <property type="entry name" value="Mn/Fe_SOD_BS"/>
</dbReference>
<dbReference type="InterPro" id="IPR019832">
    <property type="entry name" value="Mn/Fe_SOD_C"/>
</dbReference>
<dbReference type="InterPro" id="IPR019831">
    <property type="entry name" value="Mn/Fe_SOD_N"/>
</dbReference>
<dbReference type="InterPro" id="IPR036324">
    <property type="entry name" value="Mn/Fe_SOD_N_sf"/>
</dbReference>
<dbReference type="InterPro" id="IPR036314">
    <property type="entry name" value="SOD_C_sf"/>
</dbReference>
<dbReference type="NCBIfam" id="NF007832">
    <property type="entry name" value="PRK10543.1"/>
    <property type="match status" value="1"/>
</dbReference>
<dbReference type="PANTHER" id="PTHR42769">
    <property type="entry name" value="SUPEROXIDE DISMUTASE"/>
    <property type="match status" value="1"/>
</dbReference>
<dbReference type="PANTHER" id="PTHR42769:SF3">
    <property type="entry name" value="SUPEROXIDE DISMUTASE [FE] 2, CHLOROPLASTIC"/>
    <property type="match status" value="1"/>
</dbReference>
<dbReference type="Pfam" id="PF02777">
    <property type="entry name" value="Sod_Fe_C"/>
    <property type="match status" value="1"/>
</dbReference>
<dbReference type="Pfam" id="PF00081">
    <property type="entry name" value="Sod_Fe_N"/>
    <property type="match status" value="1"/>
</dbReference>
<dbReference type="PIRSF" id="PIRSF000349">
    <property type="entry name" value="SODismutase"/>
    <property type="match status" value="1"/>
</dbReference>
<dbReference type="PRINTS" id="PR01703">
    <property type="entry name" value="MNSODISMTASE"/>
</dbReference>
<dbReference type="SUPFAM" id="SSF54719">
    <property type="entry name" value="Fe,Mn superoxide dismutase (SOD), C-terminal domain"/>
    <property type="match status" value="1"/>
</dbReference>
<dbReference type="SUPFAM" id="SSF46609">
    <property type="entry name" value="Fe,Mn superoxide dismutase (SOD), N-terminal domain"/>
    <property type="match status" value="1"/>
</dbReference>
<dbReference type="PROSITE" id="PS00088">
    <property type="entry name" value="SOD_MN"/>
    <property type="match status" value="1"/>
</dbReference>
<reference key="1">
    <citation type="journal article" date="2001" name="Nature">
        <title>Complete genome sequence of a multiple drug resistant Salmonella enterica serovar Typhi CT18.</title>
        <authorList>
            <person name="Parkhill J."/>
            <person name="Dougan G."/>
            <person name="James K.D."/>
            <person name="Thomson N.R."/>
            <person name="Pickard D."/>
            <person name="Wain J."/>
            <person name="Churcher C.M."/>
            <person name="Mungall K.L."/>
            <person name="Bentley S.D."/>
            <person name="Holden M.T.G."/>
            <person name="Sebaihia M."/>
            <person name="Baker S."/>
            <person name="Basham D."/>
            <person name="Brooks K."/>
            <person name="Chillingworth T."/>
            <person name="Connerton P."/>
            <person name="Cronin A."/>
            <person name="Davis P."/>
            <person name="Davies R.M."/>
            <person name="Dowd L."/>
            <person name="White N."/>
            <person name="Farrar J."/>
            <person name="Feltwell T."/>
            <person name="Hamlin N."/>
            <person name="Haque A."/>
            <person name="Hien T.T."/>
            <person name="Holroyd S."/>
            <person name="Jagels K."/>
            <person name="Krogh A."/>
            <person name="Larsen T.S."/>
            <person name="Leather S."/>
            <person name="Moule S."/>
            <person name="O'Gaora P."/>
            <person name="Parry C."/>
            <person name="Quail M.A."/>
            <person name="Rutherford K.M."/>
            <person name="Simmonds M."/>
            <person name="Skelton J."/>
            <person name="Stevens K."/>
            <person name="Whitehead S."/>
            <person name="Barrell B.G."/>
        </authorList>
    </citation>
    <scope>NUCLEOTIDE SEQUENCE [LARGE SCALE GENOMIC DNA]</scope>
    <source>
        <strain>CT18</strain>
    </source>
</reference>
<reference key="2">
    <citation type="journal article" date="2003" name="J. Bacteriol.">
        <title>Comparative genomics of Salmonella enterica serovar Typhi strains Ty2 and CT18.</title>
        <authorList>
            <person name="Deng W."/>
            <person name="Liou S.-R."/>
            <person name="Plunkett G. III"/>
            <person name="Mayhew G.F."/>
            <person name="Rose D.J."/>
            <person name="Burland V."/>
            <person name="Kodoyianni V."/>
            <person name="Schwartz D.C."/>
            <person name="Blattner F.R."/>
        </authorList>
    </citation>
    <scope>NUCLEOTIDE SEQUENCE [LARGE SCALE GENOMIC DNA]</scope>
    <source>
        <strain>ATCC 700931 / Ty2</strain>
    </source>
</reference>
<name>SODF_SALTI</name>
<accession>P0A2F5</accession>
<accession>P40726</accession>
<feature type="initiator methionine" description="Removed" evidence="1">
    <location>
        <position position="1"/>
    </location>
</feature>
<feature type="chain" id="PRO_0000159982" description="Superoxide dismutase [Fe]">
    <location>
        <begin position="2"/>
        <end position="193"/>
    </location>
</feature>
<feature type="binding site" evidence="1">
    <location>
        <position position="27"/>
    </location>
    <ligand>
        <name>Fe cation</name>
        <dbReference type="ChEBI" id="CHEBI:24875"/>
    </ligand>
</feature>
<feature type="binding site" evidence="1">
    <location>
        <position position="74"/>
    </location>
    <ligand>
        <name>Fe cation</name>
        <dbReference type="ChEBI" id="CHEBI:24875"/>
    </ligand>
</feature>
<feature type="binding site" evidence="1">
    <location>
        <position position="157"/>
    </location>
    <ligand>
        <name>Fe cation</name>
        <dbReference type="ChEBI" id="CHEBI:24875"/>
    </ligand>
</feature>
<feature type="binding site" evidence="1">
    <location>
        <position position="161"/>
    </location>
    <ligand>
        <name>Fe cation</name>
        <dbReference type="ChEBI" id="CHEBI:24875"/>
    </ligand>
</feature>
<evidence type="ECO:0000250" key="1"/>
<evidence type="ECO:0000305" key="2"/>
<proteinExistence type="inferred from homology"/>
<sequence length="193" mass="21308">MSFELPALPYAKDALAPHISAETLEYHYGKHHQTYVTNLNNLIKGTAFEGKSLEEIVRTSEGGIFNNAAQVWNHTFYWNCLAPNAGGEPTGKLADAIAASFGSFAEFKAQFTDAAIKNFGSGWTWLVKSADGKLAIVSTSNAGTPLTTDATPLLTVDVWEHAYYIDYRNARPNYLEHFWALVNWEFVAKNLAA</sequence>
<gene>
    <name type="primary">sodB</name>
    <name type="ordered locus">STY1691</name>
    <name type="ordered locus">t1299</name>
</gene>
<protein>
    <recommendedName>
        <fullName>Superoxide dismutase [Fe]</fullName>
        <ecNumber>1.15.1.1</ecNumber>
    </recommendedName>
</protein>